<comment type="function">
    <text evidence="4">May be involved in the regulation of cell division.</text>
</comment>
<comment type="subcellular location">
    <subcellularLocation>
        <location evidence="1">Secreted</location>
    </subcellularLocation>
    <subcellularLocation>
        <location evidence="1">Secreted</location>
        <location evidence="1">Extracellular space</location>
    </subcellularLocation>
    <subcellularLocation>
        <location evidence="1">Secreted</location>
        <location evidence="1">Extracellular space</location>
        <location evidence="1">Apoplast</location>
    </subcellularLocation>
</comment>
<comment type="induction">
    <text evidence="4">Induced by phosphate.</text>
</comment>
<comment type="similarity">
    <text evidence="6">Belongs to the EXORDIUM family.</text>
</comment>
<gene>
    <name evidence="5" type="primary">PHI-1</name>
</gene>
<proteinExistence type="evidence at transcript level"/>
<accession>O82161</accession>
<protein>
    <recommendedName>
        <fullName evidence="5">Protein PHOSPHATE-INDUCED 1</fullName>
    </recommendedName>
</protein>
<sequence length="313" mass="33769">MATSHFILKLFLVISFCNVCFASRKLTALVQEPENQLLQYHKGALLFGKISVNLIWYGKFKPSQRAIVSDFITSLSSSTPSKTDPSVAKWWKTTEKYYHLANSKKSLSLYLGKQVLVENYSLGKSLTQKQIVQLASKGEQKDAINIVLTASDVAVDGFCVNRCGTHGSSKGAIIRGKTYKFAYIWVGNSETQCAGYCAWPFHQPIYGPQSPPLVAPNNDVGVDGMVINLASLLAGTATNPFGNGYYQGEADAPLEAASACPGVYAKGAYPGYAGDLLVDKTTGASYNAHGTNGRKYLLPALYDPSTSTCSTLV</sequence>
<keyword id="KW-0052">Apoplast</keyword>
<keyword id="KW-0325">Glycoprotein</keyword>
<keyword id="KW-1185">Reference proteome</keyword>
<keyword id="KW-0964">Secreted</keyword>
<keyword id="KW-0732">Signal</keyword>
<evidence type="ECO:0000250" key="1">
    <source>
        <dbReference type="UniProtKB" id="Q9ZPE7"/>
    </source>
</evidence>
<evidence type="ECO:0000255" key="2"/>
<evidence type="ECO:0000255" key="3">
    <source>
        <dbReference type="PROSITE-ProRule" id="PRU00498"/>
    </source>
</evidence>
<evidence type="ECO:0000269" key="4">
    <source>
    </source>
</evidence>
<evidence type="ECO:0000303" key="5">
    <source>
    </source>
</evidence>
<evidence type="ECO:0000305" key="6"/>
<feature type="signal peptide" evidence="2">
    <location>
        <begin position="1"/>
        <end position="22"/>
    </location>
</feature>
<feature type="chain" id="PRO_5015096817" description="Protein PHOSPHATE-INDUCED 1">
    <location>
        <begin position="23"/>
        <end position="313"/>
    </location>
</feature>
<feature type="glycosylation site" description="N-linked (GlcNAc...) asparagine" evidence="3">
    <location>
        <position position="119"/>
    </location>
</feature>
<reference key="1">
    <citation type="journal article" date="1999" name="Plant Cell Physiol.">
        <title>Phosphate as a limiting factor for the cell division of tobacco BY-2 cells.</title>
        <authorList>
            <person name="Sano T."/>
            <person name="Kuraya Y."/>
            <person name="Amino S."/>
            <person name="Nagata T."/>
        </authorList>
    </citation>
    <scope>NUCLEOTIDE SEQUENCE [MRNA]</scope>
    <scope>FUNCTION</scope>
    <scope>INDUCTION BY PHOSPHATE</scope>
    <source>
        <strain>cv. Bright Yellow 2</strain>
    </source>
</reference>
<reference key="2">
    <citation type="journal article" date="2014" name="Nat. Commun.">
        <title>The tobacco genome sequence and its comparison with those of tomato and potato.</title>
        <authorList>
            <person name="Sierro N."/>
            <person name="Battey J.N."/>
            <person name="Ouadi S."/>
            <person name="Bakaher N."/>
            <person name="Bovet L."/>
            <person name="Willig A."/>
            <person name="Goepfert S."/>
            <person name="Peitsch M.C."/>
            <person name="Ivanov N.V."/>
        </authorList>
    </citation>
    <scope>NUCLEOTIDE SEQUENCE [LARGE SCALE GENOMIC DNA]</scope>
    <source>
        <strain>cv. TN90</strain>
    </source>
</reference>
<name>PHI1_TOBAC</name>
<organism>
    <name type="scientific">Nicotiana tabacum</name>
    <name type="common">Common tobacco</name>
    <dbReference type="NCBI Taxonomy" id="4097"/>
    <lineage>
        <taxon>Eukaryota</taxon>
        <taxon>Viridiplantae</taxon>
        <taxon>Streptophyta</taxon>
        <taxon>Embryophyta</taxon>
        <taxon>Tracheophyta</taxon>
        <taxon>Spermatophyta</taxon>
        <taxon>Magnoliopsida</taxon>
        <taxon>eudicotyledons</taxon>
        <taxon>Gunneridae</taxon>
        <taxon>Pentapetalae</taxon>
        <taxon>asterids</taxon>
        <taxon>lamiids</taxon>
        <taxon>Solanales</taxon>
        <taxon>Solanaceae</taxon>
        <taxon>Nicotianoideae</taxon>
        <taxon>Nicotianeae</taxon>
        <taxon>Nicotiana</taxon>
    </lineage>
</organism>
<dbReference type="EMBL" id="AB018441">
    <property type="protein sequence ID" value="BAA33810.1"/>
    <property type="molecule type" value="mRNA"/>
</dbReference>
<dbReference type="RefSeq" id="NP_001313032.1">
    <property type="nucleotide sequence ID" value="NM_001326103.1"/>
</dbReference>
<dbReference type="STRING" id="4097.O82161"/>
<dbReference type="GlyCosmos" id="O82161">
    <property type="glycosylation" value="1 site, No reported glycans"/>
</dbReference>
<dbReference type="PaxDb" id="4097-O82161"/>
<dbReference type="GeneID" id="107822731"/>
<dbReference type="KEGG" id="nta:107822731"/>
<dbReference type="OMA" id="FASFAHE"/>
<dbReference type="OrthoDB" id="2017091at2759"/>
<dbReference type="Proteomes" id="UP000084051">
    <property type="component" value="Unplaced"/>
</dbReference>
<dbReference type="GO" id="GO:0048046">
    <property type="term" value="C:apoplast"/>
    <property type="evidence" value="ECO:0007669"/>
    <property type="project" value="UniProtKB-SubCell"/>
</dbReference>
<dbReference type="InterPro" id="IPR006766">
    <property type="entry name" value="EXORDIUM-like"/>
</dbReference>
<dbReference type="PANTHER" id="PTHR31279">
    <property type="entry name" value="PROTEIN EXORDIUM-LIKE 5"/>
    <property type="match status" value="1"/>
</dbReference>
<dbReference type="PANTHER" id="PTHR31279:SF54">
    <property type="entry name" value="PROTEIN EXORDIUM-RELATED"/>
    <property type="match status" value="1"/>
</dbReference>
<dbReference type="Pfam" id="PF04674">
    <property type="entry name" value="Phi_1"/>
    <property type="match status" value="1"/>
</dbReference>